<sequence>MSVIKMIDLDLAGKRVFIRADLNVPVKDGKVTSDARILASLPTIKHCLEAGAKVMVTSHLGRPTEGEYAEEFSLLPVVNYLNDALDCEVRLVKDYLDGVELNAGELVVLENVRFNKGEKKNEEALSKKYAALCDVFVMDAFGTAHRAQASTHGVGMFAPIACAGPLLADELEALGKAMDKPARPMVAIVGGSKVSTKLTVLESLSKIADQLVVGGGIANTFIAAAGHNVGKSLYEADLVETAKKLMEECAIPVATDVACAKAFDENAEAEIKHVSEVQDDDMIFDLGPNSTAELAEILKNAKTILWNGPVGVFEFKNFEAGTRGIAEAIAQSEGFSVAGGGDTLAAIDKFGIKADVSYISTGGGAFLEFVEGKKLPAVEMLEARAKA</sequence>
<proteinExistence type="inferred from homology"/>
<dbReference type="EC" id="2.7.2.3"/>
<dbReference type="EMBL" id="AE003852">
    <property type="protein sequence ID" value="AAF93650.1"/>
    <property type="status" value="ALT_INIT"/>
    <property type="molecule type" value="Genomic_DNA"/>
</dbReference>
<dbReference type="PIR" id="F82317">
    <property type="entry name" value="F82317"/>
</dbReference>
<dbReference type="RefSeq" id="NP_230131.1">
    <property type="nucleotide sequence ID" value="NC_002505.1"/>
</dbReference>
<dbReference type="RefSeq" id="WP_000111267.1">
    <property type="nucleotide sequence ID" value="NZ_LT906614.1"/>
</dbReference>
<dbReference type="SMR" id="P0C6Q3"/>
<dbReference type="STRING" id="243277.VC_0477"/>
<dbReference type="DNASU" id="2615271"/>
<dbReference type="EnsemblBacteria" id="AAF93650">
    <property type="protein sequence ID" value="AAF93650"/>
    <property type="gene ID" value="VC_0477"/>
</dbReference>
<dbReference type="KEGG" id="vch:VC_0477"/>
<dbReference type="PATRIC" id="fig|243277.26.peg.451"/>
<dbReference type="eggNOG" id="COG0126">
    <property type="taxonomic scope" value="Bacteria"/>
</dbReference>
<dbReference type="HOGENOM" id="CLU_025427_0_2_6"/>
<dbReference type="UniPathway" id="UPA00109">
    <property type="reaction ID" value="UER00185"/>
</dbReference>
<dbReference type="Proteomes" id="UP000000584">
    <property type="component" value="Chromosome 1"/>
</dbReference>
<dbReference type="GO" id="GO:0005829">
    <property type="term" value="C:cytosol"/>
    <property type="evidence" value="ECO:0000318"/>
    <property type="project" value="GO_Central"/>
</dbReference>
<dbReference type="GO" id="GO:0043531">
    <property type="term" value="F:ADP binding"/>
    <property type="evidence" value="ECO:0000318"/>
    <property type="project" value="GO_Central"/>
</dbReference>
<dbReference type="GO" id="GO:0005524">
    <property type="term" value="F:ATP binding"/>
    <property type="evidence" value="ECO:0000318"/>
    <property type="project" value="GO_Central"/>
</dbReference>
<dbReference type="GO" id="GO:0004618">
    <property type="term" value="F:phosphoglycerate kinase activity"/>
    <property type="evidence" value="ECO:0000318"/>
    <property type="project" value="GO_Central"/>
</dbReference>
<dbReference type="GO" id="GO:0006094">
    <property type="term" value="P:gluconeogenesis"/>
    <property type="evidence" value="ECO:0000318"/>
    <property type="project" value="GO_Central"/>
</dbReference>
<dbReference type="GO" id="GO:0006096">
    <property type="term" value="P:glycolytic process"/>
    <property type="evidence" value="ECO:0000318"/>
    <property type="project" value="GO_Central"/>
</dbReference>
<dbReference type="FunFam" id="3.40.50.1260:FF:000001">
    <property type="entry name" value="Phosphoglycerate kinase"/>
    <property type="match status" value="1"/>
</dbReference>
<dbReference type="FunFam" id="3.40.50.1260:FF:000002">
    <property type="entry name" value="Phosphoglycerate kinase"/>
    <property type="match status" value="1"/>
</dbReference>
<dbReference type="Gene3D" id="3.40.50.1260">
    <property type="entry name" value="Phosphoglycerate kinase, N-terminal domain"/>
    <property type="match status" value="2"/>
</dbReference>
<dbReference type="HAMAP" id="MF_00145">
    <property type="entry name" value="Phosphoglyc_kinase"/>
    <property type="match status" value="1"/>
</dbReference>
<dbReference type="InterPro" id="IPR001576">
    <property type="entry name" value="Phosphoglycerate_kinase"/>
</dbReference>
<dbReference type="InterPro" id="IPR015911">
    <property type="entry name" value="Phosphoglycerate_kinase_CS"/>
</dbReference>
<dbReference type="InterPro" id="IPR015824">
    <property type="entry name" value="Phosphoglycerate_kinase_N"/>
</dbReference>
<dbReference type="InterPro" id="IPR036043">
    <property type="entry name" value="Phosphoglycerate_kinase_sf"/>
</dbReference>
<dbReference type="PANTHER" id="PTHR11406">
    <property type="entry name" value="PHOSPHOGLYCERATE KINASE"/>
    <property type="match status" value="1"/>
</dbReference>
<dbReference type="PANTHER" id="PTHR11406:SF23">
    <property type="entry name" value="PHOSPHOGLYCERATE KINASE 1, CHLOROPLASTIC-RELATED"/>
    <property type="match status" value="1"/>
</dbReference>
<dbReference type="Pfam" id="PF00162">
    <property type="entry name" value="PGK"/>
    <property type="match status" value="1"/>
</dbReference>
<dbReference type="PIRSF" id="PIRSF000724">
    <property type="entry name" value="Pgk"/>
    <property type="match status" value="1"/>
</dbReference>
<dbReference type="PRINTS" id="PR00477">
    <property type="entry name" value="PHGLYCKINASE"/>
</dbReference>
<dbReference type="SUPFAM" id="SSF53748">
    <property type="entry name" value="Phosphoglycerate kinase"/>
    <property type="match status" value="1"/>
</dbReference>
<dbReference type="PROSITE" id="PS00111">
    <property type="entry name" value="PGLYCERATE_KINASE"/>
    <property type="match status" value="1"/>
</dbReference>
<comment type="catalytic activity">
    <reaction>
        <text>(2R)-3-phosphoglycerate + ATP = (2R)-3-phospho-glyceroyl phosphate + ADP</text>
        <dbReference type="Rhea" id="RHEA:14801"/>
        <dbReference type="ChEBI" id="CHEBI:30616"/>
        <dbReference type="ChEBI" id="CHEBI:57604"/>
        <dbReference type="ChEBI" id="CHEBI:58272"/>
        <dbReference type="ChEBI" id="CHEBI:456216"/>
        <dbReference type="EC" id="2.7.2.3"/>
    </reaction>
</comment>
<comment type="pathway">
    <text>Carbohydrate degradation; glycolysis; pyruvate from D-glyceraldehyde 3-phosphate: step 2/5.</text>
</comment>
<comment type="subunit">
    <text evidence="1">Monomer.</text>
</comment>
<comment type="subcellular location">
    <subcellularLocation>
        <location evidence="2">Cytoplasm</location>
    </subcellularLocation>
</comment>
<comment type="similarity">
    <text evidence="2">Belongs to the phosphoglycerate kinase family.</text>
</comment>
<comment type="sequence caution" evidence="2">
    <conflict type="erroneous initiation">
        <sequence resource="EMBL-CDS" id="AAF93650"/>
    </conflict>
</comment>
<keyword id="KW-0067">ATP-binding</keyword>
<keyword id="KW-0963">Cytoplasm</keyword>
<keyword id="KW-0324">Glycolysis</keyword>
<keyword id="KW-0418">Kinase</keyword>
<keyword id="KW-0547">Nucleotide-binding</keyword>
<keyword id="KW-1185">Reference proteome</keyword>
<keyword id="KW-0808">Transferase</keyword>
<organism>
    <name type="scientific">Vibrio cholerae serotype O1 (strain ATCC 39315 / El Tor Inaba N16961)</name>
    <dbReference type="NCBI Taxonomy" id="243277"/>
    <lineage>
        <taxon>Bacteria</taxon>
        <taxon>Pseudomonadati</taxon>
        <taxon>Pseudomonadota</taxon>
        <taxon>Gammaproteobacteria</taxon>
        <taxon>Vibrionales</taxon>
        <taxon>Vibrionaceae</taxon>
        <taxon>Vibrio</taxon>
    </lineage>
</organism>
<protein>
    <recommendedName>
        <fullName>Phosphoglycerate kinase</fullName>
        <ecNumber>2.7.2.3</ecNumber>
    </recommendedName>
</protein>
<evidence type="ECO:0000250" key="1"/>
<evidence type="ECO:0000305" key="2"/>
<name>PGK_VIBCH</name>
<accession>P0C6Q3</accession>
<accession>P96154</accession>
<accession>Q9KUN8</accession>
<gene>
    <name type="primary">pgk</name>
    <name type="ordered locus">VC_0477</name>
</gene>
<reference key="1">
    <citation type="journal article" date="2000" name="Nature">
        <title>DNA sequence of both chromosomes of the cholera pathogen Vibrio cholerae.</title>
        <authorList>
            <person name="Heidelberg J.F."/>
            <person name="Eisen J.A."/>
            <person name="Nelson W.C."/>
            <person name="Clayton R.A."/>
            <person name="Gwinn M.L."/>
            <person name="Dodson R.J."/>
            <person name="Haft D.H."/>
            <person name="Hickey E.K."/>
            <person name="Peterson J.D."/>
            <person name="Umayam L.A."/>
            <person name="Gill S.R."/>
            <person name="Nelson K.E."/>
            <person name="Read T.D."/>
            <person name="Tettelin H."/>
            <person name="Richardson D.L."/>
            <person name="Ermolaeva M.D."/>
            <person name="Vamathevan J.J."/>
            <person name="Bass S."/>
            <person name="Qin H."/>
            <person name="Dragoi I."/>
            <person name="Sellers P."/>
            <person name="McDonald L.A."/>
            <person name="Utterback T.R."/>
            <person name="Fleischmann R.D."/>
            <person name="Nierman W.C."/>
            <person name="White O."/>
            <person name="Salzberg S.L."/>
            <person name="Smith H.O."/>
            <person name="Colwell R.R."/>
            <person name="Mekalanos J.J."/>
            <person name="Venter J.C."/>
            <person name="Fraser C.M."/>
        </authorList>
    </citation>
    <scope>NUCLEOTIDE SEQUENCE [LARGE SCALE GENOMIC DNA]</scope>
    <source>
        <strain>ATCC 39315 / El Tor Inaba N16961</strain>
    </source>
</reference>
<feature type="chain" id="PRO_0000146034" description="Phosphoglycerate kinase">
    <location>
        <begin position="1"/>
        <end position="387"/>
    </location>
</feature>
<feature type="binding site" evidence="1">
    <location>
        <begin position="21"/>
        <end position="23"/>
    </location>
    <ligand>
        <name>substrate</name>
    </ligand>
</feature>
<feature type="binding site" evidence="1">
    <location>
        <position position="36"/>
    </location>
    <ligand>
        <name>substrate</name>
    </ligand>
</feature>
<feature type="binding site" evidence="1">
    <location>
        <begin position="59"/>
        <end position="62"/>
    </location>
    <ligand>
        <name>substrate</name>
    </ligand>
</feature>
<feature type="binding site" evidence="1">
    <location>
        <position position="113"/>
    </location>
    <ligand>
        <name>substrate</name>
    </ligand>
</feature>
<feature type="binding site" evidence="1">
    <location>
        <position position="146"/>
    </location>
    <ligand>
        <name>substrate</name>
    </ligand>
</feature>
<feature type="binding site" evidence="1">
    <location>
        <position position="197"/>
    </location>
    <ligand>
        <name>ATP</name>
        <dbReference type="ChEBI" id="CHEBI:30616"/>
    </ligand>
</feature>
<feature type="binding site" evidence="1">
    <location>
        <position position="314"/>
    </location>
    <ligand>
        <name>ATP</name>
        <dbReference type="ChEBI" id="CHEBI:30616"/>
    </ligand>
</feature>
<feature type="binding site" evidence="1">
    <location>
        <begin position="340"/>
        <end position="343"/>
    </location>
    <ligand>
        <name>ATP</name>
        <dbReference type="ChEBI" id="CHEBI:30616"/>
    </ligand>
</feature>